<keyword id="KW-0007">Acetylation</keyword>
<keyword id="KW-0051">Antiviral defense</keyword>
<keyword id="KW-0072">Autophagy</keyword>
<keyword id="KW-0175">Coiled coil</keyword>
<keyword id="KW-0963">Cytoplasm</keyword>
<keyword id="KW-0391">Immunity</keyword>
<keyword id="KW-0399">Innate immunity</keyword>
<keyword id="KW-0479">Metal-binding</keyword>
<keyword id="KW-0539">Nucleus</keyword>
<keyword id="KW-0597">Phosphoprotein</keyword>
<keyword id="KW-1185">Reference proteome</keyword>
<keyword id="KW-0808">Transferase</keyword>
<keyword id="KW-0832">Ubl conjugation</keyword>
<keyword id="KW-0833">Ubl conjugation pathway</keyword>
<keyword id="KW-0862">Zinc</keyword>
<keyword id="KW-0863">Zinc-finger</keyword>
<name>TRIM5_PONAB</name>
<evidence type="ECO:0000250" key="1"/>
<evidence type="ECO:0000250" key="2">
    <source>
        <dbReference type="UniProtKB" id="Q0PF16"/>
    </source>
</evidence>
<evidence type="ECO:0000250" key="3">
    <source>
        <dbReference type="UniProtKB" id="Q9C035"/>
    </source>
</evidence>
<evidence type="ECO:0000255" key="4"/>
<evidence type="ECO:0000255" key="5">
    <source>
        <dbReference type="PROSITE-ProRule" id="PRU00024"/>
    </source>
</evidence>
<evidence type="ECO:0000255" key="6">
    <source>
        <dbReference type="PROSITE-ProRule" id="PRU00175"/>
    </source>
</evidence>
<evidence type="ECO:0000255" key="7">
    <source>
        <dbReference type="PROSITE-ProRule" id="PRU00548"/>
    </source>
</evidence>
<evidence type="ECO:0000305" key="8"/>
<organism>
    <name type="scientific">Pongo abelii</name>
    <name type="common">Sumatran orangutan</name>
    <name type="synonym">Pongo pygmaeus abelii</name>
    <dbReference type="NCBI Taxonomy" id="9601"/>
    <lineage>
        <taxon>Eukaryota</taxon>
        <taxon>Metazoa</taxon>
        <taxon>Chordata</taxon>
        <taxon>Craniata</taxon>
        <taxon>Vertebrata</taxon>
        <taxon>Euteleostomi</taxon>
        <taxon>Mammalia</taxon>
        <taxon>Eutheria</taxon>
        <taxon>Euarchontoglires</taxon>
        <taxon>Primates</taxon>
        <taxon>Haplorrhini</taxon>
        <taxon>Catarrhini</taxon>
        <taxon>Hominidae</taxon>
        <taxon>Pongo</taxon>
    </lineage>
</organism>
<dbReference type="EC" id="2.3.2.27"/>
<dbReference type="EMBL" id="AY740618">
    <property type="protein sequence ID" value="AAW72446.1"/>
    <property type="molecule type" value="mRNA"/>
</dbReference>
<dbReference type="RefSeq" id="NP_001124542.1">
    <property type="nucleotide sequence ID" value="NM_001131070.1"/>
</dbReference>
<dbReference type="SMR" id="Q5C8T8"/>
<dbReference type="FunCoup" id="Q5C8T8">
    <property type="interactions" value="211"/>
</dbReference>
<dbReference type="STRING" id="9601.ENSPPYP00000004088"/>
<dbReference type="GeneID" id="100137088"/>
<dbReference type="KEGG" id="pon:100137088"/>
<dbReference type="CTD" id="85363"/>
<dbReference type="eggNOG" id="KOG2177">
    <property type="taxonomic scope" value="Eukaryota"/>
</dbReference>
<dbReference type="InParanoid" id="Q5C8T8"/>
<dbReference type="OrthoDB" id="654191at2759"/>
<dbReference type="UniPathway" id="UPA00143"/>
<dbReference type="Proteomes" id="UP000001595">
    <property type="component" value="Unplaced"/>
</dbReference>
<dbReference type="GO" id="GO:0005634">
    <property type="term" value="C:nucleus"/>
    <property type="evidence" value="ECO:0007669"/>
    <property type="project" value="UniProtKB-SubCell"/>
</dbReference>
<dbReference type="GO" id="GO:0000932">
    <property type="term" value="C:P-body"/>
    <property type="evidence" value="ECO:0000250"/>
    <property type="project" value="UniProtKB"/>
</dbReference>
<dbReference type="GO" id="GO:0038187">
    <property type="term" value="F:pattern recognition receptor activity"/>
    <property type="evidence" value="ECO:0000250"/>
    <property type="project" value="UniProtKB"/>
</dbReference>
<dbReference type="GO" id="GO:0004842">
    <property type="term" value="F:ubiquitin-protein transferase activity"/>
    <property type="evidence" value="ECO:0000250"/>
    <property type="project" value="UniProtKB"/>
</dbReference>
<dbReference type="GO" id="GO:0008270">
    <property type="term" value="F:zinc ion binding"/>
    <property type="evidence" value="ECO:0007669"/>
    <property type="project" value="UniProtKB-KW"/>
</dbReference>
<dbReference type="GO" id="GO:0002218">
    <property type="term" value="P:activation of innate immune response"/>
    <property type="evidence" value="ECO:0000250"/>
    <property type="project" value="UniProtKB"/>
</dbReference>
<dbReference type="GO" id="GO:0006914">
    <property type="term" value="P:autophagy"/>
    <property type="evidence" value="ECO:0007669"/>
    <property type="project" value="UniProtKB-KW"/>
</dbReference>
<dbReference type="GO" id="GO:0051607">
    <property type="term" value="P:defense response to virus"/>
    <property type="evidence" value="ECO:0007669"/>
    <property type="project" value="UniProtKB-KW"/>
</dbReference>
<dbReference type="GO" id="GO:0045087">
    <property type="term" value="P:innate immune response"/>
    <property type="evidence" value="ECO:0007669"/>
    <property type="project" value="UniProtKB-KW"/>
</dbReference>
<dbReference type="GO" id="GO:0043123">
    <property type="term" value="P:positive regulation of canonical NF-kappaB signal transduction"/>
    <property type="evidence" value="ECO:0000250"/>
    <property type="project" value="UniProtKB"/>
</dbReference>
<dbReference type="GO" id="GO:0043410">
    <property type="term" value="P:positive regulation of MAPK cascade"/>
    <property type="evidence" value="ECO:0000250"/>
    <property type="project" value="UniProtKB"/>
</dbReference>
<dbReference type="GO" id="GO:0051092">
    <property type="term" value="P:positive regulation of NF-kappaB transcription factor activity"/>
    <property type="evidence" value="ECO:0000250"/>
    <property type="project" value="UniProtKB"/>
</dbReference>
<dbReference type="GO" id="GO:0070534">
    <property type="term" value="P:protein K63-linked ubiquitination"/>
    <property type="evidence" value="ECO:0000250"/>
    <property type="project" value="UniProtKB"/>
</dbReference>
<dbReference type="GO" id="GO:0031664">
    <property type="term" value="P:regulation of lipopolysaccharide-mediated signaling pathway"/>
    <property type="evidence" value="ECO:0000250"/>
    <property type="project" value="UniProtKB"/>
</dbReference>
<dbReference type="CDD" id="cd19761">
    <property type="entry name" value="Bbox2_TRIM5-like"/>
    <property type="match status" value="1"/>
</dbReference>
<dbReference type="CDD" id="cd16591">
    <property type="entry name" value="RING-HC_TRIM5-like_C-IV"/>
    <property type="match status" value="1"/>
</dbReference>
<dbReference type="CDD" id="cd15822">
    <property type="entry name" value="SPRY_PRY_TRIM5"/>
    <property type="match status" value="1"/>
</dbReference>
<dbReference type="FunFam" id="2.60.120.920:FF:000023">
    <property type="entry name" value="Tripartite motif-containing 5 (Predicted)"/>
    <property type="match status" value="1"/>
</dbReference>
<dbReference type="FunFam" id="3.30.160.60:FF:000386">
    <property type="entry name" value="Tripartite motif-containing 5 (Predicted)"/>
    <property type="match status" value="1"/>
</dbReference>
<dbReference type="FunFam" id="3.30.40.10:FF:000144">
    <property type="entry name" value="Tripartite motif-containing 5 (Predicted)"/>
    <property type="match status" value="1"/>
</dbReference>
<dbReference type="Gene3D" id="2.60.120.920">
    <property type="match status" value="1"/>
</dbReference>
<dbReference type="Gene3D" id="3.30.160.60">
    <property type="entry name" value="Classic Zinc Finger"/>
    <property type="match status" value="1"/>
</dbReference>
<dbReference type="Gene3D" id="3.30.40.10">
    <property type="entry name" value="Zinc/RING finger domain, C3HC4 (zinc finger)"/>
    <property type="match status" value="1"/>
</dbReference>
<dbReference type="InterPro" id="IPR001870">
    <property type="entry name" value="B30.2/SPRY"/>
</dbReference>
<dbReference type="InterPro" id="IPR043136">
    <property type="entry name" value="B30.2/SPRY_sf"/>
</dbReference>
<dbReference type="InterPro" id="IPR003879">
    <property type="entry name" value="Butyrophylin_SPRY"/>
</dbReference>
<dbReference type="InterPro" id="IPR013320">
    <property type="entry name" value="ConA-like_dom_sf"/>
</dbReference>
<dbReference type="InterPro" id="IPR003877">
    <property type="entry name" value="SPRY_dom"/>
</dbReference>
<dbReference type="InterPro" id="IPR050143">
    <property type="entry name" value="TRIM/RBCC"/>
</dbReference>
<dbReference type="InterPro" id="IPR027370">
    <property type="entry name" value="Znf-RING_euk"/>
</dbReference>
<dbReference type="InterPro" id="IPR000315">
    <property type="entry name" value="Znf_B-box"/>
</dbReference>
<dbReference type="InterPro" id="IPR001841">
    <property type="entry name" value="Znf_RING"/>
</dbReference>
<dbReference type="InterPro" id="IPR013083">
    <property type="entry name" value="Znf_RING/FYVE/PHD"/>
</dbReference>
<dbReference type="InterPro" id="IPR017907">
    <property type="entry name" value="Znf_RING_CS"/>
</dbReference>
<dbReference type="PANTHER" id="PTHR24103">
    <property type="entry name" value="E3 UBIQUITIN-PROTEIN LIGASE TRIM"/>
    <property type="match status" value="1"/>
</dbReference>
<dbReference type="Pfam" id="PF00622">
    <property type="entry name" value="SPRY"/>
    <property type="match status" value="1"/>
</dbReference>
<dbReference type="Pfam" id="PF00643">
    <property type="entry name" value="zf-B_box"/>
    <property type="match status" value="1"/>
</dbReference>
<dbReference type="Pfam" id="PF13445">
    <property type="entry name" value="zf-RING_UBOX"/>
    <property type="match status" value="1"/>
</dbReference>
<dbReference type="PRINTS" id="PR01407">
    <property type="entry name" value="BUTYPHLNCDUF"/>
</dbReference>
<dbReference type="SMART" id="SM00336">
    <property type="entry name" value="BBOX"/>
    <property type="match status" value="1"/>
</dbReference>
<dbReference type="SMART" id="SM00184">
    <property type="entry name" value="RING"/>
    <property type="match status" value="1"/>
</dbReference>
<dbReference type="SMART" id="SM00449">
    <property type="entry name" value="SPRY"/>
    <property type="match status" value="1"/>
</dbReference>
<dbReference type="SUPFAM" id="SSF57845">
    <property type="entry name" value="B-box zinc-binding domain"/>
    <property type="match status" value="1"/>
</dbReference>
<dbReference type="SUPFAM" id="SSF49899">
    <property type="entry name" value="Concanavalin A-like lectins/glucanases"/>
    <property type="match status" value="1"/>
</dbReference>
<dbReference type="SUPFAM" id="SSF57850">
    <property type="entry name" value="RING/U-box"/>
    <property type="match status" value="1"/>
</dbReference>
<dbReference type="PROSITE" id="PS50188">
    <property type="entry name" value="B302_SPRY"/>
    <property type="match status" value="1"/>
</dbReference>
<dbReference type="PROSITE" id="PS50119">
    <property type="entry name" value="ZF_BBOX"/>
    <property type="match status" value="1"/>
</dbReference>
<dbReference type="PROSITE" id="PS00518">
    <property type="entry name" value="ZF_RING_1"/>
    <property type="match status" value="1"/>
</dbReference>
<dbReference type="PROSITE" id="PS50089">
    <property type="entry name" value="ZF_RING_2"/>
    <property type="match status" value="1"/>
</dbReference>
<reference key="1">
    <citation type="journal article" date="2005" name="J. Virol.">
        <title>The B30.2(SPRY) domain of the retroviral restriction factor TRIM5alpha exhibits lineage-specific length and sequence variation in primates.</title>
        <authorList>
            <person name="Song B."/>
            <person name="Gold B."/>
            <person name="O'Huigin C."/>
            <person name="Javanbakht H."/>
            <person name="Li X."/>
            <person name="Stremlau M."/>
            <person name="Winkler C."/>
            <person name="Dean M."/>
            <person name="Sodroski J."/>
        </authorList>
    </citation>
    <scope>NUCLEOTIDE SEQUENCE [MRNA]</scope>
</reference>
<gene>
    <name type="primary">TRIM5</name>
</gene>
<protein>
    <recommendedName>
        <fullName>Tripartite motif-containing protein 5</fullName>
        <ecNumber>2.3.2.27</ecNumber>
    </recommendedName>
    <alternativeName>
        <fullName evidence="8">RING-type E3 ubiquitin transferase TRIM5</fullName>
    </alternativeName>
    <alternativeName>
        <fullName>TRIM5alpha</fullName>
    </alternativeName>
</protein>
<comment type="function">
    <text evidence="3">Capsid-specific restriction factor that prevents infection from non-host-adapted retroviruses. Blocks viral replication early in the life cycle, after viral entry but before reverse transcription. In addition to acting as a capsid-specific restriction factor, also acts as a pattern recognition receptor that activates innate immune signaling in response to the retroviral capsid lattice. Binding to the viral capsid triggers its E3 ubiquitin ligase activity, and in concert with the heterodimeric ubiquitin conjugating enzyme complex UBE2V1-UBE2N (also known as UBC13-UEV1A complex) generates 'Lys-63'-linked polyubiquitin chains, which in turn are catalysts in the autophosphorylation of the MAP3K7/TAK1 complex (includes TAK1, TAB2, and TAB3). Activation of the MAP3K7/TAK1 complex by autophosphorylation results in the induction and expression of NF-kappa-B and MAPK-responsive inflammatory genes, thereby leading to an innate immune response in the infected cell. Plays a role in regulating autophagy through activation of autophagy regulator BECN1 by causing its dissociation from its inhibitors BCL2 and TAB2.</text>
</comment>
<comment type="catalytic activity">
    <reaction>
        <text>S-ubiquitinyl-[E2 ubiquitin-conjugating enzyme]-L-cysteine + [acceptor protein]-L-lysine = [E2 ubiquitin-conjugating enzyme]-L-cysteine + N(6)-ubiquitinyl-[acceptor protein]-L-lysine.</text>
        <dbReference type="EC" id="2.3.2.27"/>
    </reaction>
</comment>
<comment type="pathway">
    <text>Protein modification; protein ubiquitination.</text>
</comment>
<comment type="subunit">
    <text evidence="2 3">Can form homodimers and homotrimers. In addition to lower-order dimerization, also exhibits a higher-order multimerization and both low- and high-order multimerizations are essential for its restriction activity. Interacts with BTBD1 and BTBD2. Interacts with PSMC4, PSMC5, PSMD7 and HSPA8/HSC70. Interacts (via B30.2/SPRY domain) with HSPA1A/B. Interacts with PSMC2, MAP3K7/TAK1, TAB2 and TAB3. Interacts with SQSTM1. Interacts with TRIM6 and TRIM34. Interacts with ULK1 (phosphorylated form), GABARAP, GABARAPL1, GABARAPL2, MAP1LC3A, MAP1LC3C and BECN1.</text>
</comment>
<comment type="subcellular location">
    <subcellularLocation>
        <location evidence="2">Cytoplasm</location>
    </subcellularLocation>
    <subcellularLocation>
        <location evidence="2">Nucleus</location>
    </subcellularLocation>
    <text evidence="2">Predominantly localizes in cytoplasmic bodies. Localization may be influenced by the coexpression of other TRIM proteins, hence partial nuclear localization is observed in the presence of TRIM22 or TRIM27. In cytoplasmic bodies, colocalizes with proteasomal subunits and SQSTM1.</text>
</comment>
<comment type="domain">
    <text evidence="2 3">The B box-type zinc finger domain and the coiled-coil domain contribute to the higher and low order multimerization respectively which is essential for restriction activity. The coiled coil domain is important for higher order multimerization by promoting the initial dimerization.</text>
</comment>
<comment type="domain">
    <text evidence="1">The B30.2/SPRY domain acts as a capsid recognition domain. Polymorphisms in this domain explain the observed species-specific differences among orthologs (By similarity).</text>
</comment>
<comment type="domain">
    <text evidence="1">The RING-type zinc finger domain confers E3 ubiquitin ligase activity and is essential for retrovirus restriction activity, autoubiquitination and higher-order multimerization.</text>
</comment>
<comment type="PTM">
    <text evidence="1">Degraded in a proteasome-independent fashion in the absence of viral infection but in a proteasome-dependent fashion following exposure to restriction sensitive virus.</text>
</comment>
<comment type="PTM">
    <text evidence="1">Autoubiquitinated in a RING finger- and UBE2D2-dependent manner. Monoubiquitinated by TRIM21. Deubiquitinated by Yersinia YopJ. Ubiquitination may not lead to proteasomal degradation (By similarity).</text>
</comment>
<comment type="similarity">
    <text evidence="8">Belongs to the TRIM/RBCC family.</text>
</comment>
<accession>Q5C8T8</accession>
<feature type="initiator methionine" description="Removed" evidence="3">
    <location>
        <position position="1"/>
    </location>
</feature>
<feature type="chain" id="PRO_0000273471" description="Tripartite motif-containing protein 5">
    <location>
        <begin position="2"/>
        <end position="493"/>
    </location>
</feature>
<feature type="domain" description="B30.2/SPRY" evidence="7">
    <location>
        <begin position="281"/>
        <end position="493"/>
    </location>
</feature>
<feature type="zinc finger region" description="RING-type" evidence="6">
    <location>
        <begin position="15"/>
        <end position="59"/>
    </location>
</feature>
<feature type="zinc finger region" description="B box-type" evidence="5">
    <location>
        <begin position="90"/>
        <end position="132"/>
    </location>
</feature>
<feature type="region of interest" description="Required for interaction with GABARAP and for autophagy" evidence="2">
    <location>
        <begin position="185"/>
        <end position="198"/>
    </location>
</feature>
<feature type="coiled-coil region" evidence="4">
    <location>
        <begin position="131"/>
        <end position="223"/>
    </location>
</feature>
<feature type="binding site" evidence="5">
    <location>
        <position position="95"/>
    </location>
    <ligand>
        <name>Zn(2+)</name>
        <dbReference type="ChEBI" id="CHEBI:29105"/>
    </ligand>
</feature>
<feature type="binding site" evidence="5">
    <location>
        <position position="98"/>
    </location>
    <ligand>
        <name>Zn(2+)</name>
        <dbReference type="ChEBI" id="CHEBI:29105"/>
    </ligand>
</feature>
<feature type="binding site" evidence="5">
    <location>
        <position position="117"/>
    </location>
    <ligand>
        <name>Zn(2+)</name>
        <dbReference type="ChEBI" id="CHEBI:29105"/>
    </ligand>
</feature>
<feature type="binding site" evidence="5">
    <location>
        <position position="123"/>
    </location>
    <ligand>
        <name>Zn(2+)</name>
        <dbReference type="ChEBI" id="CHEBI:29105"/>
    </ligand>
</feature>
<feature type="modified residue" description="N-acetylalanine" evidence="3">
    <location>
        <position position="2"/>
    </location>
</feature>
<feature type="modified residue" description="Phosphoserine" evidence="3">
    <location>
        <position position="86"/>
    </location>
</feature>
<sequence>MASGILVNVKEEVTCPICLELLTQPLSLDCGHSFCQACLTANHKKSTLDKGERSCPVCRVSYQPKNIRPNRHVANIVEKLREVKLSPEGQKVDHCARHGEKLLLFCKEDGKVICWLCERSQEHRGHHTFLTEEVAQKYQVKLQAALEMLRQKQQEAEELEADIREEKASWKTQIQYDKTSVLADFEQLRDILDWEESNELQNLEKEEEDILKSLTKSETEMVQQTQSVRELISDVEHRLQGSVMELLQGVDGIIKRMQNVTLKKPETFPKNQRRVFRAPNLKGMLEVFRELTDVRRYWVDVTVAPNDISYAVISEDMRQVSCPEPQITYGAQGTTYQTYVNFNYCTGILGSQSITSGKHYWEVNVSKKSAWILGVCAGFQPDAMYNIEQNENYQPQYGYWVIGLEEGVKCSAFQDGSFHNPSAPFIVPLSVIICPDRVGVFLDYEACTVSFFNITNHGFLIYKFSHCSFSQPVFPYLNPRKCRVPMTLCSPSS</sequence>
<proteinExistence type="evidence at transcript level"/>